<protein>
    <recommendedName>
        <fullName evidence="10">Antimicrobial peptide 2</fullName>
        <shortName evidence="7">SmAMP2</shortName>
    </recommendedName>
    <component>
        <recommendedName>
            <fullName evidence="11">Antimicrobial peptide 2.1a</fullName>
            <shortName evidence="8">Sm-AMP-2.1a</shortName>
        </recommendedName>
    </component>
    <component>
        <recommendedName>
            <fullName evidence="11">Antimicrobial peptide 2.2a</fullName>
            <shortName evidence="8">Sm-AMP-2.2a</shortName>
        </recommendedName>
    </component>
</protein>
<dbReference type="EMBL" id="FN663152">
    <property type="protein sequence ID" value="CBJ21249.1"/>
    <property type="molecule type" value="mRNA"/>
</dbReference>
<dbReference type="PDB" id="2N1S">
    <property type="method" value="NMR"/>
    <property type="chains" value="A=68-97"/>
</dbReference>
<dbReference type="PDBsum" id="2N1S"/>
<dbReference type="SMR" id="E1UYU0"/>
<dbReference type="GO" id="GO:0008061">
    <property type="term" value="F:chitin binding"/>
    <property type="evidence" value="ECO:0007669"/>
    <property type="project" value="UniProtKB-KW"/>
</dbReference>
<dbReference type="CDD" id="cd00035">
    <property type="entry name" value="ChtBD1"/>
    <property type="match status" value="2"/>
</dbReference>
<dbReference type="Gene3D" id="3.30.60.10">
    <property type="entry name" value="Endochitinase-like"/>
    <property type="match status" value="2"/>
</dbReference>
<dbReference type="InterPro" id="IPR001002">
    <property type="entry name" value="Chitin-bd_1"/>
</dbReference>
<dbReference type="InterPro" id="IPR018371">
    <property type="entry name" value="Chitin-binding_1_CS"/>
</dbReference>
<dbReference type="InterPro" id="IPR036861">
    <property type="entry name" value="Endochitinase-like_sf"/>
</dbReference>
<dbReference type="PANTHER" id="PTHR47849:SF12">
    <property type="match status" value="1"/>
</dbReference>
<dbReference type="PANTHER" id="PTHR47849">
    <property type="entry name" value="CHITIN-BINDING LECTIN 1"/>
    <property type="match status" value="1"/>
</dbReference>
<dbReference type="Pfam" id="PF00187">
    <property type="entry name" value="Chitin_bind_1"/>
    <property type="match status" value="1"/>
</dbReference>
<dbReference type="PRINTS" id="PR00451">
    <property type="entry name" value="CHITINBINDNG"/>
</dbReference>
<dbReference type="SMART" id="SM00270">
    <property type="entry name" value="ChtBD1"/>
    <property type="match status" value="2"/>
</dbReference>
<dbReference type="SUPFAM" id="SSF57016">
    <property type="entry name" value="Plant lectins/antimicrobial peptides"/>
    <property type="match status" value="2"/>
</dbReference>
<dbReference type="PROSITE" id="PS00026">
    <property type="entry name" value="CHIT_BIND_I_1"/>
    <property type="match status" value="2"/>
</dbReference>
<dbReference type="PROSITE" id="PS50941">
    <property type="entry name" value="CHIT_BIND_I_2"/>
    <property type="match status" value="2"/>
</dbReference>
<proteinExistence type="evidence at protein level"/>
<comment type="function">
    <molecule>Antimicrobial peptide 2.1a</molecule>
    <text evidence="1">Antimicrobial peptide.</text>
</comment>
<comment type="tissue specificity">
    <text evidence="4">Expressed in roots, flowers, stem and leaves.</text>
</comment>
<comment type="induction">
    <text evidence="4">Weakly induced (up to 5-fold) by infection with phytopathogenic fungi like R.solanum, F.culmorum and B.cinerea.</text>
</comment>
<comment type="mass spectrometry">
    <molecule>Antimicrobial peptide 2.1a</molecule>
    <text>Antimicrobial peptide 2.1a.</text>
</comment>
<comment type="mass spectrometry">
    <molecule>Antimicrobial peptide 2.2a</molecule>
    <text>Antimicrobial peptide 2.2a.</text>
</comment>
<organism evidence="12">
    <name type="scientific">Stellaria media</name>
    <name type="common">Common chickweed</name>
    <name type="synonym">Alsine media</name>
    <dbReference type="NCBI Taxonomy" id="13274"/>
    <lineage>
        <taxon>Eukaryota</taxon>
        <taxon>Viridiplantae</taxon>
        <taxon>Streptophyta</taxon>
        <taxon>Embryophyta</taxon>
        <taxon>Tracheophyta</taxon>
        <taxon>Spermatophyta</taxon>
        <taxon>Magnoliopsida</taxon>
        <taxon>eudicotyledons</taxon>
        <taxon>Gunneridae</taxon>
        <taxon>Pentapetalae</taxon>
        <taxon>Caryophyllales</taxon>
        <taxon>Caryophyllaceae</taxon>
        <taxon>Alsineae</taxon>
        <taxon>Stellaria</taxon>
    </lineage>
</organism>
<reference evidence="9" key="1">
    <citation type="journal article" date="2012" name="Transgenic Res.">
        <title>Transformation of tobacco and Arabidopsis plants with Stellaria media genes encoding novel hevein-like peptides increases their resistance to fungal pathogens.</title>
        <authorList>
            <person name="Shukurov R."/>
            <person name="Voblikova V."/>
            <person name="Nikonorova A.K."/>
            <person name="Komakhin R.A."/>
            <person name="Komakhina V."/>
            <person name="Egorov T."/>
            <person name="Grishin E."/>
            <person name="Babakov A."/>
        </authorList>
    </citation>
    <scope>NUCLEOTIDE SEQUENCE [MRNA]</scope>
    <scope>TISSUE SPECIFICITY</scope>
    <scope>INDUCTION</scope>
    <source>
        <tissue evidence="7">Seed</tissue>
    </source>
</reference>
<reference evidence="9" key="2">
    <citation type="submission" date="2010-01" db="UniProtKB">
        <authorList>
            <person name="Vassilevski A.A."/>
            <person name="Musolyamov A.K."/>
            <person name="Babakov A.V."/>
            <person name="Grishin E.V."/>
            <person name="Egorov T.A."/>
        </authorList>
    </citation>
    <scope>PROTEIN SEQUENCE OF 23-57 AND 68-99</scope>
    <scope>MASS SPECTROMETRY</scope>
</reference>
<reference evidence="13" key="3">
    <citation type="submission" date="2015-04" db="PDB data bank">
        <title>Common chickweed (Stellaria media) antifungal peptides with chitin-binding domain provide unique plant defense strategy.</title>
        <authorList>
            <person name="Vassilevski A.A."/>
            <person name="Bozin T.N."/>
            <person name="Musolyamov A.K."/>
            <person name="Panova S.V."/>
            <person name="Slavokhotova A.A."/>
            <person name="Mitkevich V.A."/>
            <person name="Finkina E.I."/>
            <person name="Nikonorova A.K."/>
            <person name="Ovchinnikova T.V."/>
            <person name="Arseniev A.S."/>
            <person name="Babakov A.V."/>
            <person name="Bocharov E.V."/>
            <person name="Grishin E.V."/>
            <person name="Egorov T.A."/>
        </authorList>
    </citation>
    <scope>STRUCTURE BY NMR OF 68-97</scope>
    <scope>DISULFIDE BONDS</scope>
</reference>
<feature type="signal peptide" evidence="2">
    <location>
        <begin position="1"/>
        <end position="22"/>
    </location>
</feature>
<feature type="peptide" id="PRO_0000443555" description="Antimicrobial peptide 2.1a" evidence="5">
    <location>
        <begin position="23"/>
        <end position="57"/>
    </location>
</feature>
<feature type="propeptide" id="PRO_0000443556" evidence="11">
    <location>
        <begin position="58"/>
        <end position="67"/>
    </location>
</feature>
<feature type="peptide" id="PRO_0000443557" description="Antimicrobial peptide 2.2a" evidence="5">
    <location>
        <begin position="68"/>
        <end position="99"/>
    </location>
</feature>
<feature type="propeptide" id="PRO_0000443558" evidence="11">
    <location>
        <begin position="100"/>
        <end position="163"/>
    </location>
</feature>
<feature type="domain" description="Chitin-binding type-1 1" evidence="3">
    <location>
        <begin position="26"/>
        <end position="66"/>
    </location>
</feature>
<feature type="domain" description="Chitin-binding type-1 2" evidence="3">
    <location>
        <begin position="69"/>
        <end position="107"/>
    </location>
</feature>
<feature type="disulfide bond" evidence="3">
    <location>
        <begin position="29"/>
        <end position="42"/>
    </location>
</feature>
<feature type="disulfide bond" evidence="3">
    <location>
        <begin position="36"/>
        <end position="48"/>
    </location>
</feature>
<feature type="disulfide bond" evidence="3">
    <location>
        <begin position="41"/>
        <end position="55"/>
    </location>
</feature>
<feature type="disulfide bond" evidence="3 6 13">
    <location>
        <begin position="72"/>
        <end position="83"/>
    </location>
</feature>
<feature type="disulfide bond" evidence="3 6 13">
    <location>
        <begin position="77"/>
        <end position="89"/>
    </location>
</feature>
<feature type="disulfide bond" evidence="3 6 13">
    <location>
        <begin position="82"/>
        <end position="96"/>
    </location>
</feature>
<feature type="disulfide bond" evidence="3">
    <location>
        <begin position="101"/>
        <end position="105"/>
    </location>
</feature>
<feature type="strand" evidence="14">
    <location>
        <begin position="87"/>
        <end position="90"/>
    </location>
</feature>
<feature type="helix" evidence="14">
    <location>
        <begin position="93"/>
        <end position="96"/>
    </location>
</feature>
<accession>E1UYU0</accession>
<keyword id="KW-0002">3D-structure</keyword>
<keyword id="KW-0929">Antimicrobial</keyword>
<keyword id="KW-0147">Chitin-binding</keyword>
<keyword id="KW-0903">Direct protein sequencing</keyword>
<keyword id="KW-1015">Disulfide bond</keyword>
<keyword id="KW-0732">Signal</keyword>
<sequence>MLNMKSFALLMLFATLVGVTIAYDPNGKCGRQYGKCRAGQCCSQYGYCGSGSKYCAHNTPLSEIEPTAAGQCYRGRCSGGLCCSKYGYCGSGPAYCGLGMCQGSCLPDMPNHPAQIQARTEAAQAEAQAEAYNQANEAAQVEAYYQAQTQAQPQVEPAVTKAP</sequence>
<evidence type="ECO:0000250" key="1">
    <source>
        <dbReference type="UniProtKB" id="E1UYT9"/>
    </source>
</evidence>
<evidence type="ECO:0000255" key="2"/>
<evidence type="ECO:0000255" key="3">
    <source>
        <dbReference type="PROSITE-ProRule" id="PRU00261"/>
    </source>
</evidence>
<evidence type="ECO:0000269" key="4">
    <source>
    </source>
</evidence>
<evidence type="ECO:0000269" key="5">
    <source ref="2"/>
</evidence>
<evidence type="ECO:0000269" key="6">
    <source ref="3"/>
</evidence>
<evidence type="ECO:0000303" key="7">
    <source>
    </source>
</evidence>
<evidence type="ECO:0000303" key="8">
    <source ref="2"/>
</evidence>
<evidence type="ECO:0000305" key="9"/>
<evidence type="ECO:0000305" key="10">
    <source>
    </source>
</evidence>
<evidence type="ECO:0000305" key="11">
    <source ref="2"/>
</evidence>
<evidence type="ECO:0000312" key="12">
    <source>
        <dbReference type="EMBL" id="CBJ21249.1"/>
    </source>
</evidence>
<evidence type="ECO:0007744" key="13">
    <source>
        <dbReference type="PDB" id="2N1S"/>
    </source>
</evidence>
<evidence type="ECO:0007829" key="14">
    <source>
        <dbReference type="PDB" id="2N1S"/>
    </source>
</evidence>
<name>AMP2_STEME</name>